<organism>
    <name type="scientific">Chlamydia pneumoniae</name>
    <name type="common">Chlamydophila pneumoniae</name>
    <dbReference type="NCBI Taxonomy" id="83558"/>
    <lineage>
        <taxon>Bacteria</taxon>
        <taxon>Pseudomonadati</taxon>
        <taxon>Chlamydiota</taxon>
        <taxon>Chlamydiia</taxon>
        <taxon>Chlamydiales</taxon>
        <taxon>Chlamydiaceae</taxon>
        <taxon>Chlamydia/Chlamydophila group</taxon>
        <taxon>Chlamydia</taxon>
    </lineage>
</organism>
<reference key="1">
    <citation type="journal article" date="1999" name="Nat. Genet.">
        <title>Comparative genomes of Chlamydia pneumoniae and C. trachomatis.</title>
        <authorList>
            <person name="Kalman S."/>
            <person name="Mitchell W.P."/>
            <person name="Marathe R."/>
            <person name="Lammel C.J."/>
            <person name="Fan J."/>
            <person name="Hyman R.W."/>
            <person name="Olinger L."/>
            <person name="Grimwood J."/>
            <person name="Davis R.W."/>
            <person name="Stephens R.S."/>
        </authorList>
    </citation>
    <scope>NUCLEOTIDE SEQUENCE [LARGE SCALE GENOMIC DNA]</scope>
    <source>
        <strain>CWL029</strain>
    </source>
</reference>
<reference key="2">
    <citation type="journal article" date="2000" name="Nucleic Acids Res.">
        <title>Genome sequences of Chlamydia trachomatis MoPn and Chlamydia pneumoniae AR39.</title>
        <authorList>
            <person name="Read T.D."/>
            <person name="Brunham R.C."/>
            <person name="Shen C."/>
            <person name="Gill S.R."/>
            <person name="Heidelberg J.F."/>
            <person name="White O."/>
            <person name="Hickey E.K."/>
            <person name="Peterson J.D."/>
            <person name="Utterback T.R."/>
            <person name="Berry K.J."/>
            <person name="Bass S."/>
            <person name="Linher K.D."/>
            <person name="Weidman J.F."/>
            <person name="Khouri H.M."/>
            <person name="Craven B."/>
            <person name="Bowman C."/>
            <person name="Dodson R.J."/>
            <person name="Gwinn M.L."/>
            <person name="Nelson W.C."/>
            <person name="DeBoy R.T."/>
            <person name="Kolonay J.F."/>
            <person name="McClarty G."/>
            <person name="Salzberg S.L."/>
            <person name="Eisen J.A."/>
            <person name="Fraser C.M."/>
        </authorList>
    </citation>
    <scope>NUCLEOTIDE SEQUENCE [LARGE SCALE GENOMIC DNA]</scope>
    <source>
        <strain>AR39</strain>
    </source>
</reference>
<reference key="3">
    <citation type="journal article" date="2000" name="Nucleic Acids Res.">
        <title>Comparison of whole genome sequences of Chlamydia pneumoniae J138 from Japan and CWL029 from USA.</title>
        <authorList>
            <person name="Shirai M."/>
            <person name="Hirakawa H."/>
            <person name="Kimoto M."/>
            <person name="Tabuchi M."/>
            <person name="Kishi F."/>
            <person name="Ouchi K."/>
            <person name="Shiba T."/>
            <person name="Ishii K."/>
            <person name="Hattori M."/>
            <person name="Kuhara S."/>
            <person name="Nakazawa T."/>
        </authorList>
    </citation>
    <scope>NUCLEOTIDE SEQUENCE [LARGE SCALE GENOMIC DNA]</scope>
    <source>
        <strain>J138</strain>
    </source>
</reference>
<reference key="4">
    <citation type="submission" date="2002-05" db="EMBL/GenBank/DDBJ databases">
        <title>The genome sequence of Chlamydia pneumoniae TW183 and comparison with other Chlamydia strains based on whole genome sequence analysis.</title>
        <authorList>
            <person name="Geng M.M."/>
            <person name="Schuhmacher A."/>
            <person name="Muehldorfer I."/>
            <person name="Bensch K.W."/>
            <person name="Schaefer K.P."/>
            <person name="Schneider S."/>
            <person name="Pohl T."/>
            <person name="Essig A."/>
            <person name="Marre R."/>
            <person name="Melchers K."/>
        </authorList>
    </citation>
    <scope>NUCLEOTIDE SEQUENCE [LARGE SCALE GENOMIC DNA]</scope>
    <source>
        <strain>TW-183</strain>
    </source>
</reference>
<accession>Q9Z8M4</accession>
<accession>Q9JQJ8</accession>
<protein>
    <recommendedName>
        <fullName>Thioredoxin reductase</fullName>
        <shortName>TRXR</shortName>
        <ecNumber>1.8.1.9</ecNumber>
    </recommendedName>
</protein>
<keyword id="KW-0963">Cytoplasm</keyword>
<keyword id="KW-1015">Disulfide bond</keyword>
<keyword id="KW-0274">FAD</keyword>
<keyword id="KW-0285">Flavoprotein</keyword>
<keyword id="KW-0521">NADP</keyword>
<keyword id="KW-0560">Oxidoreductase</keyword>
<keyword id="KW-0676">Redox-active center</keyword>
<gene>
    <name type="primary">trxB</name>
    <name type="ordered locus">CPn_0314</name>
    <name type="ordered locus">CP_0444</name>
    <name type="ordered locus">CpB0322</name>
</gene>
<comment type="catalytic activity">
    <reaction>
        <text>[thioredoxin]-dithiol + NADP(+) = [thioredoxin]-disulfide + NADPH + H(+)</text>
        <dbReference type="Rhea" id="RHEA:20345"/>
        <dbReference type="Rhea" id="RHEA-COMP:10698"/>
        <dbReference type="Rhea" id="RHEA-COMP:10700"/>
        <dbReference type="ChEBI" id="CHEBI:15378"/>
        <dbReference type="ChEBI" id="CHEBI:29950"/>
        <dbReference type="ChEBI" id="CHEBI:50058"/>
        <dbReference type="ChEBI" id="CHEBI:57783"/>
        <dbReference type="ChEBI" id="CHEBI:58349"/>
        <dbReference type="EC" id="1.8.1.9"/>
    </reaction>
</comment>
<comment type="cofactor">
    <cofactor evidence="2">
        <name>FAD</name>
        <dbReference type="ChEBI" id="CHEBI:57692"/>
    </cofactor>
    <text evidence="2">Binds 1 FAD per subunit.</text>
</comment>
<comment type="subunit">
    <text evidence="2">Homodimer.</text>
</comment>
<comment type="subcellular location">
    <subcellularLocation>
        <location evidence="1">Cytoplasm</location>
    </subcellularLocation>
</comment>
<comment type="miscellaneous">
    <text>The active site is a redox-active disulfide bond.</text>
</comment>
<comment type="similarity">
    <text evidence="3">Belongs to the class-II pyridine nucleotide-disulfide oxidoreductase family.</text>
</comment>
<dbReference type="EC" id="1.8.1.9"/>
<dbReference type="EMBL" id="AE001363">
    <property type="protein sequence ID" value="AAD18463.1"/>
    <property type="molecule type" value="Genomic_DNA"/>
</dbReference>
<dbReference type="EMBL" id="AE002161">
    <property type="protein sequence ID" value="AAF38283.1"/>
    <property type="molecule type" value="Genomic_DNA"/>
</dbReference>
<dbReference type="EMBL" id="BA000008">
    <property type="protein sequence ID" value="BAA98524.1"/>
    <property type="molecule type" value="Genomic_DNA"/>
</dbReference>
<dbReference type="EMBL" id="AE009440">
    <property type="protein sequence ID" value="AAP98256.1"/>
    <property type="molecule type" value="Genomic_DNA"/>
</dbReference>
<dbReference type="PIR" id="B86530">
    <property type="entry name" value="B86530"/>
</dbReference>
<dbReference type="PIR" id="C72093">
    <property type="entry name" value="C72093"/>
</dbReference>
<dbReference type="RefSeq" id="NP_224519.1">
    <property type="nucleotide sequence ID" value="NC_000922.1"/>
</dbReference>
<dbReference type="RefSeq" id="WP_010882962.1">
    <property type="nucleotide sequence ID" value="NZ_LN847257.1"/>
</dbReference>
<dbReference type="SMR" id="Q9Z8M4"/>
<dbReference type="STRING" id="406984.CPK_ORF00821"/>
<dbReference type="GeneID" id="45050363"/>
<dbReference type="KEGG" id="cpa:CP_0444"/>
<dbReference type="KEGG" id="cpj:trxB"/>
<dbReference type="KEGG" id="cpn:CPn_0314"/>
<dbReference type="KEGG" id="cpt:CpB0322"/>
<dbReference type="PATRIC" id="fig|115713.3.peg.348"/>
<dbReference type="eggNOG" id="COG0492">
    <property type="taxonomic scope" value="Bacteria"/>
</dbReference>
<dbReference type="HOGENOM" id="CLU_031864_5_1_0"/>
<dbReference type="Proteomes" id="UP000000583">
    <property type="component" value="Chromosome"/>
</dbReference>
<dbReference type="Proteomes" id="UP000000801">
    <property type="component" value="Chromosome"/>
</dbReference>
<dbReference type="GO" id="GO:0005737">
    <property type="term" value="C:cytoplasm"/>
    <property type="evidence" value="ECO:0007669"/>
    <property type="project" value="UniProtKB-SubCell"/>
</dbReference>
<dbReference type="GO" id="GO:0004791">
    <property type="term" value="F:thioredoxin-disulfide reductase (NADPH) activity"/>
    <property type="evidence" value="ECO:0007669"/>
    <property type="project" value="UniProtKB-EC"/>
</dbReference>
<dbReference type="GO" id="GO:0019430">
    <property type="term" value="P:removal of superoxide radicals"/>
    <property type="evidence" value="ECO:0007669"/>
    <property type="project" value="InterPro"/>
</dbReference>
<dbReference type="Gene3D" id="3.50.50.60">
    <property type="entry name" value="FAD/NAD(P)-binding domain"/>
    <property type="match status" value="2"/>
</dbReference>
<dbReference type="InterPro" id="IPR036188">
    <property type="entry name" value="FAD/NAD-bd_sf"/>
</dbReference>
<dbReference type="InterPro" id="IPR023753">
    <property type="entry name" value="FAD/NAD-binding_dom"/>
</dbReference>
<dbReference type="InterPro" id="IPR050097">
    <property type="entry name" value="Ferredoxin-NADP_redctase_2"/>
</dbReference>
<dbReference type="InterPro" id="IPR008255">
    <property type="entry name" value="Pyr_nucl-diS_OxRdtase_2_AS"/>
</dbReference>
<dbReference type="InterPro" id="IPR005982">
    <property type="entry name" value="Thioredox_Rdtase"/>
</dbReference>
<dbReference type="NCBIfam" id="TIGR01292">
    <property type="entry name" value="TRX_reduct"/>
    <property type="match status" value="1"/>
</dbReference>
<dbReference type="PANTHER" id="PTHR48105">
    <property type="entry name" value="THIOREDOXIN REDUCTASE 1-RELATED-RELATED"/>
    <property type="match status" value="1"/>
</dbReference>
<dbReference type="Pfam" id="PF07992">
    <property type="entry name" value="Pyr_redox_2"/>
    <property type="match status" value="1"/>
</dbReference>
<dbReference type="PRINTS" id="PR00368">
    <property type="entry name" value="FADPNR"/>
</dbReference>
<dbReference type="PRINTS" id="PR00469">
    <property type="entry name" value="PNDRDTASEII"/>
</dbReference>
<dbReference type="SUPFAM" id="SSF51905">
    <property type="entry name" value="FAD/NAD(P)-binding domain"/>
    <property type="match status" value="1"/>
</dbReference>
<dbReference type="PROSITE" id="PS00573">
    <property type="entry name" value="PYRIDINE_REDOX_2"/>
    <property type="match status" value="1"/>
</dbReference>
<feature type="chain" id="PRO_0000166725" description="Thioredoxin reductase">
    <location>
        <begin position="1"/>
        <end position="311"/>
    </location>
</feature>
<feature type="binding site" evidence="2">
    <location>
        <begin position="33"/>
        <end position="43"/>
    </location>
    <ligand>
        <name>FAD</name>
        <dbReference type="ChEBI" id="CHEBI:57692"/>
    </ligand>
</feature>
<feature type="binding site" evidence="2">
    <location>
        <begin position="283"/>
        <end position="292"/>
    </location>
    <ligand>
        <name>FAD</name>
        <dbReference type="ChEBI" id="CHEBI:57692"/>
    </ligand>
</feature>
<feature type="disulfide bond" description="Redox-active" evidence="2">
    <location>
        <begin position="138"/>
        <end position="141"/>
    </location>
</feature>
<name>TRXB_CHLPN</name>
<sequence>MIHSRLIIIGSGPSGYTAAIYASRALLHPLLFEGFFSGISGGQLMTTTEVENFPGFPEGILGPKLMNNMKEQAVRFGTKTLAQDIISVDFSVRPFILKSKEETYSCDACIIATGASAKRLEIPGAGNDEFWQKGVTACAVCDGASPIFKNKDLYVIGGGDSALEEALYLTRYGSHVYVVHRRDKLRASKAMEARAQNNEKITFLWNSEIVKISGDSIVRSVDIKNVQTQEITTREAAGVFFAIGHKPNTDFLGGQLTLDESGYIVTEKGTSKTSVPGVFAAGDVQDKYYRQAVTSAGSGCIAALDAERFLG</sequence>
<evidence type="ECO:0000250" key="1"/>
<evidence type="ECO:0000250" key="2">
    <source>
        <dbReference type="UniProtKB" id="P0A9P4"/>
    </source>
</evidence>
<evidence type="ECO:0000305" key="3"/>
<proteinExistence type="inferred from homology"/>